<name>TAM_MYCSJ</name>
<gene>
    <name evidence="1" type="primary">tam</name>
    <name type="ordered locus">Mjls_0374</name>
</gene>
<accession>A3PTG0</accession>
<comment type="function">
    <text evidence="1">Catalyzes the S-adenosylmethionine monomethyl esterification of trans-aconitate.</text>
</comment>
<comment type="catalytic activity">
    <reaction evidence="1">
        <text>trans-aconitate + S-adenosyl-L-methionine = (E)-3-(methoxycarbonyl)pent-2-enedioate + S-adenosyl-L-homocysteine</text>
        <dbReference type="Rhea" id="RHEA:14969"/>
        <dbReference type="ChEBI" id="CHEBI:15708"/>
        <dbReference type="ChEBI" id="CHEBI:57470"/>
        <dbReference type="ChEBI" id="CHEBI:57856"/>
        <dbReference type="ChEBI" id="CHEBI:59789"/>
        <dbReference type="EC" id="2.1.1.144"/>
    </reaction>
</comment>
<comment type="subcellular location">
    <subcellularLocation>
        <location evidence="1">Cytoplasm</location>
    </subcellularLocation>
</comment>
<comment type="similarity">
    <text evidence="1">Belongs to the methyltransferase superfamily. Tam family.</text>
</comment>
<feature type="chain" id="PRO_1000056562" description="Trans-aconitate 2-methyltransferase">
    <location>
        <begin position="1"/>
        <end position="254"/>
    </location>
</feature>
<sequence length="254" mass="28459">MWNPEAYLSFADHRGRPFFDLLARVGADAPRRVVDLGCGPGNLTVVLRHRWPEAVVEAWDNSPEMVAAARERGVQANLGDVRGWSPQPDTDVVLSNATLQWVPEHPELLTRWAGALAAGSWLAMQVPGNFDAPSHQAVRRLADREPWAPLLHDIPFRVGKVVETPADYAALLTDAGCSVDAWETTYIHELTDAHPVLEWITGTALRPVRSRLTDEQWDRFRAELIPLLDEAYPVRADGRTFFPFRRVFVVARTG</sequence>
<proteinExistence type="inferred from homology"/>
<protein>
    <recommendedName>
        <fullName evidence="1">Trans-aconitate 2-methyltransferase</fullName>
        <ecNumber evidence="1">2.1.1.144</ecNumber>
    </recommendedName>
</protein>
<reference key="1">
    <citation type="submission" date="2007-02" db="EMBL/GenBank/DDBJ databases">
        <title>Complete sequence of Mycobacterium sp. JLS.</title>
        <authorList>
            <consortium name="US DOE Joint Genome Institute"/>
            <person name="Copeland A."/>
            <person name="Lucas S."/>
            <person name="Lapidus A."/>
            <person name="Barry K."/>
            <person name="Detter J.C."/>
            <person name="Glavina del Rio T."/>
            <person name="Hammon N."/>
            <person name="Israni S."/>
            <person name="Dalin E."/>
            <person name="Tice H."/>
            <person name="Pitluck S."/>
            <person name="Chain P."/>
            <person name="Malfatti S."/>
            <person name="Shin M."/>
            <person name="Vergez L."/>
            <person name="Schmutz J."/>
            <person name="Larimer F."/>
            <person name="Land M."/>
            <person name="Hauser L."/>
            <person name="Kyrpides N."/>
            <person name="Mikhailova N."/>
            <person name="Miller C.D."/>
            <person name="Anderson A.J."/>
            <person name="Sims R.C."/>
            <person name="Richardson P."/>
        </authorList>
    </citation>
    <scope>NUCLEOTIDE SEQUENCE [LARGE SCALE GENOMIC DNA]</scope>
    <source>
        <strain>JLS</strain>
    </source>
</reference>
<keyword id="KW-0963">Cytoplasm</keyword>
<keyword id="KW-0489">Methyltransferase</keyword>
<keyword id="KW-0949">S-adenosyl-L-methionine</keyword>
<keyword id="KW-0808">Transferase</keyword>
<evidence type="ECO:0000255" key="1">
    <source>
        <dbReference type="HAMAP-Rule" id="MF_00560"/>
    </source>
</evidence>
<organism>
    <name type="scientific">Mycobacterium sp. (strain JLS)</name>
    <dbReference type="NCBI Taxonomy" id="164757"/>
    <lineage>
        <taxon>Bacteria</taxon>
        <taxon>Bacillati</taxon>
        <taxon>Actinomycetota</taxon>
        <taxon>Actinomycetes</taxon>
        <taxon>Mycobacteriales</taxon>
        <taxon>Mycobacteriaceae</taxon>
        <taxon>Mycobacterium</taxon>
    </lineage>
</organism>
<dbReference type="EC" id="2.1.1.144" evidence="1"/>
<dbReference type="EMBL" id="CP000580">
    <property type="protein sequence ID" value="ABN96187.1"/>
    <property type="molecule type" value="Genomic_DNA"/>
</dbReference>
<dbReference type="SMR" id="A3PTG0"/>
<dbReference type="KEGG" id="mjl:Mjls_0374"/>
<dbReference type="HOGENOM" id="CLU_037990_5_2_11"/>
<dbReference type="BioCyc" id="MSP164757:G1G8C-379-MONOMER"/>
<dbReference type="GO" id="GO:0005737">
    <property type="term" value="C:cytoplasm"/>
    <property type="evidence" value="ECO:0007669"/>
    <property type="project" value="UniProtKB-SubCell"/>
</dbReference>
<dbReference type="GO" id="GO:0030798">
    <property type="term" value="F:trans-aconitate 2-methyltransferase activity"/>
    <property type="evidence" value="ECO:0007669"/>
    <property type="project" value="UniProtKB-UniRule"/>
</dbReference>
<dbReference type="GO" id="GO:0032259">
    <property type="term" value="P:methylation"/>
    <property type="evidence" value="ECO:0007669"/>
    <property type="project" value="UniProtKB-KW"/>
</dbReference>
<dbReference type="CDD" id="cd02440">
    <property type="entry name" value="AdoMet_MTases"/>
    <property type="match status" value="1"/>
</dbReference>
<dbReference type="Gene3D" id="1.10.150.290">
    <property type="entry name" value="S-adenosyl-L-methionine-dependent methyltransferases"/>
    <property type="match status" value="1"/>
</dbReference>
<dbReference type="Gene3D" id="3.40.50.150">
    <property type="entry name" value="Vaccinia Virus protein VP39"/>
    <property type="match status" value="1"/>
</dbReference>
<dbReference type="HAMAP" id="MF_00560">
    <property type="entry name" value="Tran_acon_Me_trans"/>
    <property type="match status" value="1"/>
</dbReference>
<dbReference type="InterPro" id="IPR029063">
    <property type="entry name" value="SAM-dependent_MTases_sf"/>
</dbReference>
<dbReference type="InterPro" id="IPR023506">
    <property type="entry name" value="Trans-aconitate_MeTrfase"/>
</dbReference>
<dbReference type="InterPro" id="IPR023149">
    <property type="entry name" value="Trans_acon_MeTrfase_C"/>
</dbReference>
<dbReference type="NCBIfam" id="NF010703">
    <property type="entry name" value="PRK14103.1"/>
    <property type="match status" value="1"/>
</dbReference>
<dbReference type="PANTHER" id="PTHR43861:SF1">
    <property type="entry name" value="TRANS-ACONITATE 2-METHYLTRANSFERASE"/>
    <property type="match status" value="1"/>
</dbReference>
<dbReference type="PANTHER" id="PTHR43861">
    <property type="entry name" value="TRANS-ACONITATE 2-METHYLTRANSFERASE-RELATED"/>
    <property type="match status" value="1"/>
</dbReference>
<dbReference type="Pfam" id="PF13489">
    <property type="entry name" value="Methyltransf_23"/>
    <property type="match status" value="1"/>
</dbReference>
<dbReference type="SUPFAM" id="SSF53335">
    <property type="entry name" value="S-adenosyl-L-methionine-dependent methyltransferases"/>
    <property type="match status" value="1"/>
</dbReference>